<reference key="1">
    <citation type="journal article" date="2002" name="Lancet">
        <title>Genome and virulence determinants of high virulence community-acquired MRSA.</title>
        <authorList>
            <person name="Baba T."/>
            <person name="Takeuchi F."/>
            <person name="Kuroda M."/>
            <person name="Yuzawa H."/>
            <person name="Aoki K."/>
            <person name="Oguchi A."/>
            <person name="Nagai Y."/>
            <person name="Iwama N."/>
            <person name="Asano K."/>
            <person name="Naimi T."/>
            <person name="Kuroda H."/>
            <person name="Cui L."/>
            <person name="Yamamoto K."/>
            <person name="Hiramatsu K."/>
        </authorList>
    </citation>
    <scope>NUCLEOTIDE SEQUENCE [LARGE SCALE GENOMIC DNA]</scope>
    <source>
        <strain>MW2</strain>
    </source>
</reference>
<protein>
    <recommendedName>
        <fullName evidence="1">Porphobilinogen deaminase</fullName>
        <shortName evidence="1">PBG</shortName>
        <ecNumber evidence="1">2.5.1.61</ecNumber>
    </recommendedName>
    <alternativeName>
        <fullName evidence="1">Hydroxymethylbilane synthase</fullName>
        <shortName evidence="1">HMBS</shortName>
    </alternativeName>
    <alternativeName>
        <fullName evidence="1">Pre-uroporphyrinogen synthase</fullName>
    </alternativeName>
</protein>
<comment type="function">
    <text evidence="1">Tetrapolymerization of the monopyrrole PBG into the hydroxymethylbilane pre-uroporphyrinogen in several discrete steps.</text>
</comment>
<comment type="catalytic activity">
    <reaction evidence="1">
        <text>4 porphobilinogen + H2O = hydroxymethylbilane + 4 NH4(+)</text>
        <dbReference type="Rhea" id="RHEA:13185"/>
        <dbReference type="ChEBI" id="CHEBI:15377"/>
        <dbReference type="ChEBI" id="CHEBI:28938"/>
        <dbReference type="ChEBI" id="CHEBI:57845"/>
        <dbReference type="ChEBI" id="CHEBI:58126"/>
        <dbReference type="EC" id="2.5.1.61"/>
    </reaction>
</comment>
<comment type="cofactor">
    <cofactor evidence="1">
        <name>dipyrromethane</name>
        <dbReference type="ChEBI" id="CHEBI:60342"/>
    </cofactor>
    <text evidence="1">Binds 1 dipyrromethane group covalently.</text>
</comment>
<comment type="pathway">
    <text evidence="1">Porphyrin-containing compound metabolism; protoporphyrin-IX biosynthesis; coproporphyrinogen-III from 5-aminolevulinate: step 2/4.</text>
</comment>
<comment type="subunit">
    <text evidence="1">Monomer.</text>
</comment>
<comment type="miscellaneous">
    <text evidence="1">The porphobilinogen subunits are added to the dipyrromethane group.</text>
</comment>
<comment type="similarity">
    <text evidence="1">Belongs to the HMBS family.</text>
</comment>
<organism>
    <name type="scientific">Staphylococcus aureus (strain MW2)</name>
    <dbReference type="NCBI Taxonomy" id="196620"/>
    <lineage>
        <taxon>Bacteria</taxon>
        <taxon>Bacillati</taxon>
        <taxon>Bacillota</taxon>
        <taxon>Bacilli</taxon>
        <taxon>Bacillales</taxon>
        <taxon>Staphylococcaceae</taxon>
        <taxon>Staphylococcus</taxon>
    </lineage>
</organism>
<name>HEM3_STAAW</name>
<gene>
    <name evidence="1" type="primary">hemC</name>
    <name type="ordered locus">MW1614</name>
</gene>
<feature type="chain" id="PRO_0000142994" description="Porphobilinogen deaminase">
    <location>
        <begin position="1"/>
        <end position="308"/>
    </location>
</feature>
<feature type="modified residue" description="S-(dipyrrolylmethanemethyl)cysteine" evidence="1">
    <location>
        <position position="241"/>
    </location>
</feature>
<proteinExistence type="inferred from homology"/>
<sequence>MRKLVVGSRRSKLALTQSQQFIDKLKAVEPNLEIEIKEIVTKGDRIVDKQLSKVGGKGLFVKEIQHELFEKNIDMAIHSLKDVPSVIPEGLTLGCIPDRELPFDAYISKTHTPLSQLPEGSIIGTSSLRRGAQILSKYPNLEIKWIRGNIDTRLEKLQTEDYDAIILAAAGLRRMGWSDDIVTSYLDRDTLLPAIGQGALGIECRSDDEELLTLLSKVHNDEVAKCVTAERTFLAEMDGSCQVPIAGYATISDQKEIEFTGLIMTPDGKERFEYTMNGTDPVELGKTVSNKLKEQGAYEIIKRLNEQH</sequence>
<evidence type="ECO:0000255" key="1">
    <source>
        <dbReference type="HAMAP-Rule" id="MF_00260"/>
    </source>
</evidence>
<accession>Q8NW74</accession>
<dbReference type="EC" id="2.5.1.61" evidence="1"/>
<dbReference type="EMBL" id="BA000033">
    <property type="protein sequence ID" value="BAB95479.1"/>
    <property type="molecule type" value="Genomic_DNA"/>
</dbReference>
<dbReference type="RefSeq" id="WP_001230226.1">
    <property type="nucleotide sequence ID" value="NC_003923.1"/>
</dbReference>
<dbReference type="SMR" id="Q8NW74"/>
<dbReference type="KEGG" id="sam:MW1614"/>
<dbReference type="HOGENOM" id="CLU_019704_0_2_9"/>
<dbReference type="UniPathway" id="UPA00251">
    <property type="reaction ID" value="UER00319"/>
</dbReference>
<dbReference type="GO" id="GO:0005737">
    <property type="term" value="C:cytoplasm"/>
    <property type="evidence" value="ECO:0007669"/>
    <property type="project" value="TreeGrafter"/>
</dbReference>
<dbReference type="GO" id="GO:0004418">
    <property type="term" value="F:hydroxymethylbilane synthase activity"/>
    <property type="evidence" value="ECO:0007669"/>
    <property type="project" value="UniProtKB-UniRule"/>
</dbReference>
<dbReference type="GO" id="GO:0006782">
    <property type="term" value="P:protoporphyrinogen IX biosynthetic process"/>
    <property type="evidence" value="ECO:0007669"/>
    <property type="project" value="UniProtKB-UniRule"/>
</dbReference>
<dbReference type="CDD" id="cd13646">
    <property type="entry name" value="PBP2_EcHMBS_like"/>
    <property type="match status" value="1"/>
</dbReference>
<dbReference type="FunFam" id="3.30.160.40:FF:000001">
    <property type="entry name" value="Porphobilinogen deaminase"/>
    <property type="match status" value="1"/>
</dbReference>
<dbReference type="FunFam" id="3.40.190.10:FF:000004">
    <property type="entry name" value="Porphobilinogen deaminase"/>
    <property type="match status" value="1"/>
</dbReference>
<dbReference type="FunFam" id="3.40.190.10:FF:000005">
    <property type="entry name" value="Porphobilinogen deaminase"/>
    <property type="match status" value="1"/>
</dbReference>
<dbReference type="Gene3D" id="3.40.190.10">
    <property type="entry name" value="Periplasmic binding protein-like II"/>
    <property type="match status" value="2"/>
</dbReference>
<dbReference type="Gene3D" id="3.30.160.40">
    <property type="entry name" value="Porphobilinogen deaminase, C-terminal domain"/>
    <property type="match status" value="1"/>
</dbReference>
<dbReference type="HAMAP" id="MF_00260">
    <property type="entry name" value="Porphobil_deam"/>
    <property type="match status" value="1"/>
</dbReference>
<dbReference type="InterPro" id="IPR000860">
    <property type="entry name" value="HemC"/>
</dbReference>
<dbReference type="InterPro" id="IPR022419">
    <property type="entry name" value="Porphobilin_deaminase_cofac_BS"/>
</dbReference>
<dbReference type="InterPro" id="IPR022417">
    <property type="entry name" value="Porphobilin_deaminase_N"/>
</dbReference>
<dbReference type="InterPro" id="IPR022418">
    <property type="entry name" value="Porphobilinogen_deaminase_C"/>
</dbReference>
<dbReference type="InterPro" id="IPR036803">
    <property type="entry name" value="Porphobilinogen_deaminase_C_sf"/>
</dbReference>
<dbReference type="NCBIfam" id="TIGR00212">
    <property type="entry name" value="hemC"/>
    <property type="match status" value="1"/>
</dbReference>
<dbReference type="PANTHER" id="PTHR11557">
    <property type="entry name" value="PORPHOBILINOGEN DEAMINASE"/>
    <property type="match status" value="1"/>
</dbReference>
<dbReference type="PANTHER" id="PTHR11557:SF0">
    <property type="entry name" value="PORPHOBILINOGEN DEAMINASE"/>
    <property type="match status" value="1"/>
</dbReference>
<dbReference type="Pfam" id="PF01379">
    <property type="entry name" value="Porphobil_deam"/>
    <property type="match status" value="1"/>
</dbReference>
<dbReference type="Pfam" id="PF03900">
    <property type="entry name" value="Porphobil_deamC"/>
    <property type="match status" value="1"/>
</dbReference>
<dbReference type="PIRSF" id="PIRSF001438">
    <property type="entry name" value="4pyrrol_synth_OHMeBilane_synth"/>
    <property type="match status" value="1"/>
</dbReference>
<dbReference type="PRINTS" id="PR00151">
    <property type="entry name" value="PORPHBDMNASE"/>
</dbReference>
<dbReference type="SUPFAM" id="SSF53850">
    <property type="entry name" value="Periplasmic binding protein-like II"/>
    <property type="match status" value="1"/>
</dbReference>
<dbReference type="SUPFAM" id="SSF54782">
    <property type="entry name" value="Porphobilinogen deaminase (hydroxymethylbilane synthase), C-terminal domain"/>
    <property type="match status" value="1"/>
</dbReference>
<dbReference type="PROSITE" id="PS00533">
    <property type="entry name" value="PORPHOBILINOGEN_DEAM"/>
    <property type="match status" value="1"/>
</dbReference>
<keyword id="KW-0627">Porphyrin biosynthesis</keyword>
<keyword id="KW-0808">Transferase</keyword>